<dbReference type="EC" id="2.7.12.2"/>
<dbReference type="EMBL" id="Z22736">
    <property type="protein sequence ID" value="CAA80430.1"/>
    <property type="molecule type" value="mRNA"/>
</dbReference>
<dbReference type="PIR" id="A54694">
    <property type="entry name" value="A54694"/>
</dbReference>
<dbReference type="PIR" id="S36039">
    <property type="entry name" value="S36039"/>
</dbReference>
<dbReference type="SMR" id="Q07192"/>
<dbReference type="AGR" id="Xenbase:XB-GENE-482155"/>
<dbReference type="Xenbase" id="XB-GENE-482155">
    <property type="gene designation" value="map2k4.L"/>
</dbReference>
<dbReference type="Proteomes" id="UP000186698">
    <property type="component" value="Unplaced"/>
</dbReference>
<dbReference type="GO" id="GO:0005524">
    <property type="term" value="F:ATP binding"/>
    <property type="evidence" value="ECO:0007669"/>
    <property type="project" value="UniProtKB-KW"/>
</dbReference>
<dbReference type="GO" id="GO:0008545">
    <property type="term" value="F:JUN kinase kinase activity"/>
    <property type="evidence" value="ECO:0007669"/>
    <property type="project" value="TreeGrafter"/>
</dbReference>
<dbReference type="GO" id="GO:0004708">
    <property type="term" value="F:MAP kinase kinase activity"/>
    <property type="evidence" value="ECO:0000318"/>
    <property type="project" value="GO_Central"/>
</dbReference>
<dbReference type="GO" id="GO:0106310">
    <property type="term" value="F:protein serine kinase activity"/>
    <property type="evidence" value="ECO:0007669"/>
    <property type="project" value="RHEA"/>
</dbReference>
<dbReference type="GO" id="GO:0004674">
    <property type="term" value="F:protein serine/threonine kinase activity"/>
    <property type="evidence" value="ECO:0007669"/>
    <property type="project" value="UniProtKB-KW"/>
</dbReference>
<dbReference type="GO" id="GO:0004713">
    <property type="term" value="F:protein tyrosine kinase activity"/>
    <property type="evidence" value="ECO:0007669"/>
    <property type="project" value="UniProtKB-KW"/>
</dbReference>
<dbReference type="GO" id="GO:0000165">
    <property type="term" value="P:MAPK cascade"/>
    <property type="evidence" value="ECO:0000318"/>
    <property type="project" value="GO_Central"/>
</dbReference>
<dbReference type="CDD" id="cd06616">
    <property type="entry name" value="PKc_MKK4"/>
    <property type="match status" value="1"/>
</dbReference>
<dbReference type="FunFam" id="1.10.510.10:FF:000090">
    <property type="entry name" value="Dual specificity mitogen-activated protein kinase kinase 4"/>
    <property type="match status" value="1"/>
</dbReference>
<dbReference type="FunFam" id="3.30.200.20:FF:000126">
    <property type="entry name" value="Dual specificity mitogen-activated protein kinase kinase 4"/>
    <property type="match status" value="1"/>
</dbReference>
<dbReference type="Gene3D" id="3.30.200.20">
    <property type="entry name" value="Phosphorylase Kinase, domain 1"/>
    <property type="match status" value="1"/>
</dbReference>
<dbReference type="Gene3D" id="1.10.510.10">
    <property type="entry name" value="Transferase(Phosphotransferase) domain 1"/>
    <property type="match status" value="1"/>
</dbReference>
<dbReference type="InterPro" id="IPR011009">
    <property type="entry name" value="Kinase-like_dom_sf"/>
</dbReference>
<dbReference type="InterPro" id="IPR000719">
    <property type="entry name" value="Prot_kinase_dom"/>
</dbReference>
<dbReference type="InterPro" id="IPR017441">
    <property type="entry name" value="Protein_kinase_ATP_BS"/>
</dbReference>
<dbReference type="InterPro" id="IPR008271">
    <property type="entry name" value="Ser/Thr_kinase_AS"/>
</dbReference>
<dbReference type="PANTHER" id="PTHR48013:SF15">
    <property type="entry name" value="DUAL SPECIFICITY MITOGEN-ACTIVATED PROTEIN KINASE KINASE 4"/>
    <property type="match status" value="1"/>
</dbReference>
<dbReference type="PANTHER" id="PTHR48013">
    <property type="entry name" value="DUAL SPECIFICITY MITOGEN-ACTIVATED PROTEIN KINASE KINASE 5-RELATED"/>
    <property type="match status" value="1"/>
</dbReference>
<dbReference type="Pfam" id="PF00069">
    <property type="entry name" value="Pkinase"/>
    <property type="match status" value="1"/>
</dbReference>
<dbReference type="SMART" id="SM00220">
    <property type="entry name" value="S_TKc"/>
    <property type="match status" value="1"/>
</dbReference>
<dbReference type="SUPFAM" id="SSF56112">
    <property type="entry name" value="Protein kinase-like (PK-like)"/>
    <property type="match status" value="1"/>
</dbReference>
<dbReference type="PROSITE" id="PS00107">
    <property type="entry name" value="PROTEIN_KINASE_ATP"/>
    <property type="match status" value="1"/>
</dbReference>
<dbReference type="PROSITE" id="PS50011">
    <property type="entry name" value="PROTEIN_KINASE_DOM"/>
    <property type="match status" value="1"/>
</dbReference>
<dbReference type="PROSITE" id="PS00108">
    <property type="entry name" value="PROTEIN_KINASE_ST"/>
    <property type="match status" value="1"/>
</dbReference>
<keyword id="KW-0025">Alternative splicing</keyword>
<keyword id="KW-0067">ATP-binding</keyword>
<keyword id="KW-0418">Kinase</keyword>
<keyword id="KW-0547">Nucleotide-binding</keyword>
<keyword id="KW-0597">Phosphoprotein</keyword>
<keyword id="KW-1185">Reference proteome</keyword>
<keyword id="KW-0723">Serine/threonine-protein kinase</keyword>
<keyword id="KW-0808">Transferase</keyword>
<keyword id="KW-0829">Tyrosine-protein kinase</keyword>
<reference key="1">
    <citation type="journal article" date="1993" name="Mol. Cell. Biol.">
        <title>Novel members of the mitogen-activated protein kinase activator family in Xenopus laevis.</title>
        <authorList>
            <person name="Yashar B.M."/>
            <person name="Kelley C."/>
            <person name="Yee K."/>
            <person name="Errede B."/>
            <person name="Zon L.I."/>
        </authorList>
    </citation>
    <scope>NUCLEOTIDE SEQUENCE [MRNA] (ISOFORMS 1 AND 2)</scope>
    <source>
        <tissue>Embryo</tissue>
    </source>
</reference>
<sequence>AQWGLLHCSLHLVANILTMATSNPSGSSGSSAGLGFQGQSQQHSTVNSMQGKRKALKLNFANPAFKSTAKFTLNPTIQSTHVMHKLDAIRKLETSYQKQDLRTSGAKALSTNEQATKNRLERLRTHSIESSGKLKLSPEQHWDFTAEDLKDLGEIGRGAYGSVNKMSHTPSGQIMAVKRIRSTVDEKEQKQLLMDLDVVMRSSDCPYIVQFYGALFREGDCWICMELMATSFDKFYKYVYSFLDDVIPEEILGKITLATVKALNHLKENLKIIHRDIKPSNILLDTNGNIKLCDFGISGQLVDSIAKTRDAGCRPYMAPERIDPSASRQGYDVRSDVWSLGITLYELATGRFPYPKWNSVFDQLTQVVKGDPPQLSNSEEREFSPSFTSFVNQCLTKDESKRPKYKELLKHPFILMYEERTVDVAGYVGKILEQMPVSPSSPMYVD</sequence>
<organism>
    <name type="scientific">Xenopus laevis</name>
    <name type="common">African clawed frog</name>
    <dbReference type="NCBI Taxonomy" id="8355"/>
    <lineage>
        <taxon>Eukaryota</taxon>
        <taxon>Metazoa</taxon>
        <taxon>Chordata</taxon>
        <taxon>Craniata</taxon>
        <taxon>Vertebrata</taxon>
        <taxon>Euteleostomi</taxon>
        <taxon>Amphibia</taxon>
        <taxon>Batrachia</taxon>
        <taxon>Anura</taxon>
        <taxon>Pipoidea</taxon>
        <taxon>Pipidae</taxon>
        <taxon>Xenopodinae</taxon>
        <taxon>Xenopus</taxon>
        <taxon>Xenopus</taxon>
    </lineage>
</organism>
<name>MP2K2_XENLA</name>
<evidence type="ECO:0000250" key="1"/>
<evidence type="ECO:0000255" key="2">
    <source>
        <dbReference type="PROSITE-ProRule" id="PRU00159"/>
    </source>
</evidence>
<evidence type="ECO:0000255" key="3">
    <source>
        <dbReference type="PROSITE-ProRule" id="PRU10027"/>
    </source>
</evidence>
<evidence type="ECO:0000256" key="4">
    <source>
        <dbReference type="SAM" id="MobiDB-lite"/>
    </source>
</evidence>
<evidence type="ECO:0000303" key="5">
    <source>
    </source>
</evidence>
<evidence type="ECO:0000305" key="6"/>
<proteinExistence type="evidence at protein level"/>
<comment type="function">
    <text>Catalyzes the concomitant phosphorylation of a threonine and a tyrosine residue in a Thr-Glu-Tyr sequence located in MAP kinases.</text>
</comment>
<comment type="catalytic activity">
    <reaction>
        <text>L-seryl-[protein] + ATP = O-phospho-L-seryl-[protein] + ADP + H(+)</text>
        <dbReference type="Rhea" id="RHEA:17989"/>
        <dbReference type="Rhea" id="RHEA-COMP:9863"/>
        <dbReference type="Rhea" id="RHEA-COMP:11604"/>
        <dbReference type="ChEBI" id="CHEBI:15378"/>
        <dbReference type="ChEBI" id="CHEBI:29999"/>
        <dbReference type="ChEBI" id="CHEBI:30616"/>
        <dbReference type="ChEBI" id="CHEBI:83421"/>
        <dbReference type="ChEBI" id="CHEBI:456216"/>
        <dbReference type="EC" id="2.7.12.2"/>
    </reaction>
</comment>
<comment type="catalytic activity">
    <reaction>
        <text>L-threonyl-[protein] + ATP = O-phospho-L-threonyl-[protein] + ADP + H(+)</text>
        <dbReference type="Rhea" id="RHEA:46608"/>
        <dbReference type="Rhea" id="RHEA-COMP:11060"/>
        <dbReference type="Rhea" id="RHEA-COMP:11605"/>
        <dbReference type="ChEBI" id="CHEBI:15378"/>
        <dbReference type="ChEBI" id="CHEBI:30013"/>
        <dbReference type="ChEBI" id="CHEBI:30616"/>
        <dbReference type="ChEBI" id="CHEBI:61977"/>
        <dbReference type="ChEBI" id="CHEBI:456216"/>
        <dbReference type="EC" id="2.7.12.2"/>
    </reaction>
</comment>
<comment type="catalytic activity">
    <reaction>
        <text>L-tyrosyl-[protein] + ATP = O-phospho-L-tyrosyl-[protein] + ADP + H(+)</text>
        <dbReference type="Rhea" id="RHEA:10596"/>
        <dbReference type="Rhea" id="RHEA-COMP:10136"/>
        <dbReference type="Rhea" id="RHEA-COMP:20101"/>
        <dbReference type="ChEBI" id="CHEBI:15378"/>
        <dbReference type="ChEBI" id="CHEBI:30616"/>
        <dbReference type="ChEBI" id="CHEBI:46858"/>
        <dbReference type="ChEBI" id="CHEBI:61978"/>
        <dbReference type="ChEBI" id="CHEBI:456216"/>
        <dbReference type="EC" id="2.7.12.2"/>
    </reaction>
</comment>
<comment type="alternative products">
    <event type="alternative splicing"/>
    <isoform>
        <id>Q07192-1</id>
        <name>1</name>
        <sequence type="displayed"/>
    </isoform>
    <isoform>
        <id>Q07192-2</id>
        <name>2</name>
        <sequence type="described" ref="VSP_004876"/>
    </isoform>
</comment>
<comment type="tissue specificity">
    <text>Expressed abundantly in the adult brain and muscle.</text>
</comment>
<comment type="developmental stage">
    <text>It is initially expressed in the dorsal region of the embryo in a diffuse pattern at stage 17. Subsequently expression occurs in the early stages of development of the central nervous system, including the brain, spinal cord and eye. Later (stage 24) expression is found in the hindbrain, midbrain and forebrain and the somites. By stage 32, the expression is detected in the cranial neurons. Expression in the brain is increased, while expression in the spinal cord has decreased by stage 37.</text>
</comment>
<comment type="PTM">
    <text>MAPKK is itself dependent on Ser/Thr phosphorylation for activity catalyzed by MAP kinase kinase kinases.</text>
</comment>
<comment type="similarity">
    <text evidence="6">Belongs to the protein kinase superfamily. STE Ser/Thr protein kinase family. MAP kinase kinase subfamily.</text>
</comment>
<accession>Q07192</accession>
<feature type="chain" id="PRO_0000086377" description="Dual specificity mitogen-activated protein kinase kinase 2">
    <location>
        <begin position="1" status="less than"/>
        <end position="446"/>
    </location>
</feature>
<feature type="domain" description="Protein kinase" evidence="2">
    <location>
        <begin position="149"/>
        <end position="414"/>
    </location>
</feature>
<feature type="region of interest" description="Disordered" evidence="4">
    <location>
        <begin position="27"/>
        <end position="51"/>
    </location>
</feature>
<feature type="compositionally biased region" description="Low complexity" evidence="4">
    <location>
        <begin position="27"/>
        <end position="42"/>
    </location>
</feature>
<feature type="active site" description="Proton acceptor" evidence="2 3">
    <location>
        <position position="276"/>
    </location>
</feature>
<feature type="binding site" evidence="2">
    <location>
        <begin position="155"/>
        <end position="163"/>
    </location>
    <ligand>
        <name>ATP</name>
        <dbReference type="ChEBI" id="CHEBI:30616"/>
    </ligand>
</feature>
<feature type="binding site" evidence="2">
    <location>
        <position position="178"/>
    </location>
    <ligand>
        <name>ATP</name>
        <dbReference type="ChEBI" id="CHEBI:30616"/>
    </ligand>
</feature>
<feature type="modified residue" description="Phosphoserine; by RAF" evidence="1">
    <location>
        <position position="304"/>
    </location>
</feature>
<feature type="modified residue" description="Phosphothreonine; by RAF" evidence="1">
    <location>
        <position position="308"/>
    </location>
</feature>
<feature type="splice variant" id="VSP_004876" description="In isoform 2." evidence="5">
    <original>G</original>
    <variation>GLQINLCDNTQS</variation>
    <location>
        <position position="51"/>
    </location>
</feature>
<feature type="mutagenesis site" description="Loss of activity.">
    <original>K</original>
    <variation>R</variation>
    <location>
        <position position="178"/>
    </location>
</feature>
<feature type="non-terminal residue">
    <location>
        <position position="1"/>
    </location>
</feature>
<protein>
    <recommendedName>
        <fullName>Dual specificity mitogen-activated protein kinase kinase 2</fullName>
        <shortName>MAP kinase kinase 2</shortName>
        <shortName>MAPKK 2</shortName>
        <ecNumber>2.7.12.2</ecNumber>
    </recommendedName>
    <alternativeName>
        <fullName>MAPK-ERK kinase 2</fullName>
    </alternativeName>
</protein>
<gene>
    <name type="primary">map2k2</name>
    <name type="synonym">mek2</name>
</gene>